<protein>
    <recommendedName>
        <fullName>Predicted GPI-anchored protein 19</fullName>
    </recommendedName>
</protein>
<feature type="signal peptide" evidence="1">
    <location>
        <begin position="1"/>
        <end position="20"/>
    </location>
</feature>
<feature type="chain" id="PRO_0000424923" description="Predicted GPI-anchored protein 19">
    <location>
        <begin position="21"/>
        <end position="208"/>
    </location>
</feature>
<feature type="propeptide" id="PRO_0000424924" description="Removed in mature form" evidence="1">
    <location>
        <begin position="209"/>
        <end position="229"/>
    </location>
</feature>
<feature type="region of interest" description="Disordered" evidence="2">
    <location>
        <begin position="63"/>
        <end position="92"/>
    </location>
</feature>
<feature type="compositionally biased region" description="Polar residues" evidence="2">
    <location>
        <begin position="81"/>
        <end position="92"/>
    </location>
</feature>
<feature type="lipid moiety-binding region" description="GPI-anchor amidated glycine" evidence="1">
    <location>
        <position position="208"/>
    </location>
</feature>
<feature type="glycosylation site" description="N-linked (GlcNAc...) asparagine" evidence="1">
    <location>
        <position position="87"/>
    </location>
</feature>
<feature type="glycosylation site" description="N-linked (GlcNAc...) asparagine" evidence="1">
    <location>
        <position position="184"/>
    </location>
</feature>
<feature type="glycosylation site" description="N-linked (GlcNAc...) asparagine" evidence="1">
    <location>
        <position position="189"/>
    </location>
</feature>
<proteinExistence type="evidence at protein level"/>
<organism>
    <name type="scientific">Candida albicans (strain SC5314 / ATCC MYA-2876)</name>
    <name type="common">Yeast</name>
    <dbReference type="NCBI Taxonomy" id="237561"/>
    <lineage>
        <taxon>Eukaryota</taxon>
        <taxon>Fungi</taxon>
        <taxon>Dikarya</taxon>
        <taxon>Ascomycota</taxon>
        <taxon>Saccharomycotina</taxon>
        <taxon>Pichiomycetes</taxon>
        <taxon>Debaryomycetaceae</taxon>
        <taxon>Candida/Lodderomyces clade</taxon>
        <taxon>Candida</taxon>
    </lineage>
</organism>
<gene>
    <name type="primary">PGA19</name>
    <name type="ordered locus">CAALFM_C200910WA</name>
    <name type="ORF">CaO19.2033</name>
    <name type="ORF">CaO19.9581</name>
</gene>
<evidence type="ECO:0000255" key="1"/>
<evidence type="ECO:0000256" key="2">
    <source>
        <dbReference type="SAM" id="MobiDB-lite"/>
    </source>
</evidence>
<evidence type="ECO:0000269" key="3">
    <source>
    </source>
</evidence>
<evidence type="ECO:0000269" key="4">
    <source>
    </source>
</evidence>
<evidence type="ECO:0000305" key="5"/>
<keyword id="KW-1003">Cell membrane</keyword>
<keyword id="KW-0325">Glycoprotein</keyword>
<keyword id="KW-0336">GPI-anchor</keyword>
<keyword id="KW-0449">Lipoprotein</keyword>
<keyword id="KW-0472">Membrane</keyword>
<keyword id="KW-1185">Reference proteome</keyword>
<keyword id="KW-0732">Signal</keyword>
<keyword id="KW-0843">Virulence</keyword>
<dbReference type="EMBL" id="CP017624">
    <property type="protein sequence ID" value="AOW27143.1"/>
    <property type="molecule type" value="Genomic_DNA"/>
</dbReference>
<dbReference type="RefSeq" id="XP_719482.2">
    <property type="nucleotide sequence ID" value="XM_714389.2"/>
</dbReference>
<dbReference type="SMR" id="Q5AD34"/>
<dbReference type="STRING" id="237561.Q5AD34"/>
<dbReference type="GlyCosmos" id="Q5AD34">
    <property type="glycosylation" value="3 sites, No reported glycans"/>
</dbReference>
<dbReference type="EnsemblFungi" id="C2_00910W_A-T">
    <property type="protein sequence ID" value="C2_00910W_A-T-p1"/>
    <property type="gene ID" value="C2_00910W_A"/>
</dbReference>
<dbReference type="GeneID" id="3638894"/>
<dbReference type="KEGG" id="cal:CAALFM_C200910WA"/>
<dbReference type="CGD" id="CAL0000177109">
    <property type="gene designation" value="PGA19"/>
</dbReference>
<dbReference type="VEuPathDB" id="FungiDB:C2_00910W_A"/>
<dbReference type="HOGENOM" id="CLU_1219554_0_0_1"/>
<dbReference type="InParanoid" id="Q5AD34"/>
<dbReference type="OrthoDB" id="4009871at2759"/>
<dbReference type="PRO" id="PR:Q5AD34"/>
<dbReference type="Proteomes" id="UP000000559">
    <property type="component" value="Chromosome 2"/>
</dbReference>
<dbReference type="GO" id="GO:0005886">
    <property type="term" value="C:plasma membrane"/>
    <property type="evidence" value="ECO:0007669"/>
    <property type="project" value="UniProtKB-SubCell"/>
</dbReference>
<dbReference type="GO" id="GO:0098552">
    <property type="term" value="C:side of membrane"/>
    <property type="evidence" value="ECO:0007669"/>
    <property type="project" value="UniProtKB-KW"/>
</dbReference>
<accession>Q5AD34</accession>
<accession>A0A1D8PG87</accession>
<name>PGA19_CANAL</name>
<comment type="function">
    <text>Predicted GPI-anchored protein which may have a role during host infection.</text>
</comment>
<comment type="subcellular location">
    <subcellularLocation>
        <location evidence="5">Cell membrane</location>
        <topology evidence="5">Lipid-anchor</topology>
        <topology evidence="5">GPI-anchor</topology>
    </subcellularLocation>
</comment>
<comment type="induction">
    <text evidence="3 4">Up-regulated upon interaction of cells with host macrophages and upon milbemycins A3 oxim derivative (A3Ox) treatment.</text>
</comment>
<reference key="1">
    <citation type="journal article" date="2004" name="Proc. Natl. Acad. Sci. U.S.A.">
        <title>The diploid genome sequence of Candida albicans.</title>
        <authorList>
            <person name="Jones T."/>
            <person name="Federspiel N.A."/>
            <person name="Chibana H."/>
            <person name="Dungan J."/>
            <person name="Kalman S."/>
            <person name="Magee B.B."/>
            <person name="Newport G."/>
            <person name="Thorstenson Y.R."/>
            <person name="Agabian N."/>
            <person name="Magee P.T."/>
            <person name="Davis R.W."/>
            <person name="Scherer S."/>
        </authorList>
    </citation>
    <scope>NUCLEOTIDE SEQUENCE [LARGE SCALE GENOMIC DNA]</scope>
    <source>
        <strain>SC5314 / ATCC MYA-2876</strain>
    </source>
</reference>
<reference key="2">
    <citation type="journal article" date="2007" name="Genome Biol.">
        <title>Assembly of the Candida albicans genome into sixteen supercontigs aligned on the eight chromosomes.</title>
        <authorList>
            <person name="van het Hoog M."/>
            <person name="Rast T.J."/>
            <person name="Martchenko M."/>
            <person name="Grindle S."/>
            <person name="Dignard D."/>
            <person name="Hogues H."/>
            <person name="Cuomo C."/>
            <person name="Berriman M."/>
            <person name="Scherer S."/>
            <person name="Magee B.B."/>
            <person name="Whiteway M."/>
            <person name="Chibana H."/>
            <person name="Nantel A."/>
            <person name="Magee P.T."/>
        </authorList>
    </citation>
    <scope>GENOME REANNOTATION</scope>
    <source>
        <strain>SC5314 / ATCC MYA-2876</strain>
    </source>
</reference>
<reference key="3">
    <citation type="journal article" date="2013" name="Genome Biol.">
        <title>Assembly of a phased diploid Candida albicans genome facilitates allele-specific measurements and provides a simple model for repeat and indel structure.</title>
        <authorList>
            <person name="Muzzey D."/>
            <person name="Schwartz K."/>
            <person name="Weissman J.S."/>
            <person name="Sherlock G."/>
        </authorList>
    </citation>
    <scope>NUCLEOTIDE SEQUENCE [LARGE SCALE GENOMIC DNA]</scope>
    <scope>GENOME REANNOTATION</scope>
    <source>
        <strain>SC5314 / ATCC MYA-2876</strain>
    </source>
</reference>
<reference key="4">
    <citation type="journal article" date="2003" name="Yeast">
        <title>Genome-wide identification of fungal GPI proteins.</title>
        <authorList>
            <person name="De Groot P.W."/>
            <person name="Hellingwerf K.J."/>
            <person name="Klis F.M."/>
        </authorList>
    </citation>
    <scope>PREDICTION OF GPI-ANCHOR</scope>
</reference>
<reference key="5">
    <citation type="journal article" date="2007" name="Mol. Cell. Proteomics">
        <title>Integrated proteomics and genomics strategies bring new insight into Candida albicans response upon macrophage interaction.</title>
        <authorList>
            <person name="Fernandez-Arenas E."/>
            <person name="Cabezon V."/>
            <person name="Bermejo C."/>
            <person name="Arroyo J."/>
            <person name="Nombela C."/>
            <person name="Diez-Orejas R."/>
            <person name="Gil C."/>
        </authorList>
    </citation>
    <scope>INDUCTION</scope>
</reference>
<reference key="6">
    <citation type="journal article" date="2013" name="Antimicrob. Agents Chemother.">
        <title>Milbemycins: more than efflux inhibitors for fungal pathogens.</title>
        <authorList>
            <person name="Silva L.V."/>
            <person name="Sanguinetti M."/>
            <person name="Vandeputte P."/>
            <person name="Torelli R."/>
            <person name="Rochat B."/>
            <person name="Sanglard D."/>
        </authorList>
    </citation>
    <scope>INDUCTION</scope>
</reference>
<sequence>MFSTTSIVLWFTILLPVTLPVSIDNRDLLLKRHVEPNDIQFFNQGVRSSLSYIYQKRDVSDSDNEQVLRKSKKKKKTTSTGTPGNENTTDFASAQEFEKWEGDREGWQISAGLYFDKAIASDSCDSDSEDEDEGRKKFWIFTDDAPVDNENLIVSSEDKLELNYISSGKNLEGLTKVIRKAKGNSTTYNQSKIKFNVDAQGEDQFESGFGSLIPYNSFYLYILLFCIIF</sequence>